<evidence type="ECO:0000255" key="1">
    <source>
        <dbReference type="HAMAP-Rule" id="MF_01216"/>
    </source>
</evidence>
<evidence type="ECO:0007829" key="2">
    <source>
        <dbReference type="PDB" id="4C0X"/>
    </source>
</evidence>
<sequence length="203" mass="21365">MKLLHIDSSILGDNSASRQLSREVVEAWKAADPSVEVVYRDLAADAIAHFSAATLVAAGTPEDVRDAAQAFEAKLSAETLEEFLAADAVVIGAPMYNFTVPTQLKAWIDRVAVAGKTFRYTEAGPQGLCGNKKVVLVSTAGGLHAGQPTGAGHEDFLKVFLGFIGITDLEIVRAHGLAYGPEQRSQAIDAAQAQIASELFAAA</sequence>
<comment type="function">
    <text evidence="1">Quinone reductase that provides resistance to thiol-specific stress caused by electrophilic quinones.</text>
</comment>
<comment type="function">
    <text evidence="1">Also exhibits azoreductase activity. Catalyzes the reductive cleavage of the azo bond in aromatic azo compounds to the corresponding amines.</text>
</comment>
<comment type="catalytic activity">
    <reaction evidence="1">
        <text>2 a quinone + NADH + H(+) = 2 a 1,4-benzosemiquinone + NAD(+)</text>
        <dbReference type="Rhea" id="RHEA:65952"/>
        <dbReference type="ChEBI" id="CHEBI:15378"/>
        <dbReference type="ChEBI" id="CHEBI:57540"/>
        <dbReference type="ChEBI" id="CHEBI:57945"/>
        <dbReference type="ChEBI" id="CHEBI:132124"/>
        <dbReference type="ChEBI" id="CHEBI:134225"/>
    </reaction>
</comment>
<comment type="catalytic activity">
    <reaction evidence="1">
        <text>N,N-dimethyl-1,4-phenylenediamine + anthranilate + 2 NAD(+) = 2-(4-dimethylaminophenyl)diazenylbenzoate + 2 NADH + 2 H(+)</text>
        <dbReference type="Rhea" id="RHEA:55872"/>
        <dbReference type="ChEBI" id="CHEBI:15378"/>
        <dbReference type="ChEBI" id="CHEBI:15783"/>
        <dbReference type="ChEBI" id="CHEBI:16567"/>
        <dbReference type="ChEBI" id="CHEBI:57540"/>
        <dbReference type="ChEBI" id="CHEBI:57945"/>
        <dbReference type="ChEBI" id="CHEBI:71579"/>
        <dbReference type="EC" id="1.7.1.17"/>
    </reaction>
</comment>
<comment type="cofactor">
    <cofactor evidence="1">
        <name>FMN</name>
        <dbReference type="ChEBI" id="CHEBI:58210"/>
    </cofactor>
    <text evidence="1">Binds 1 FMN per subunit.</text>
</comment>
<comment type="subunit">
    <text evidence="1">Homodimer.</text>
</comment>
<comment type="similarity">
    <text evidence="1">Belongs to the azoreductase type 1 family.</text>
</comment>
<gene>
    <name evidence="1" type="primary">azoR1</name>
    <name type="ordered locus">PP_2866</name>
</gene>
<dbReference type="EC" id="1.6.5.-" evidence="1"/>
<dbReference type="EC" id="1.7.1.17" evidence="1"/>
<dbReference type="EMBL" id="AE015451">
    <property type="protein sequence ID" value="AAN68474.1"/>
    <property type="molecule type" value="Genomic_DNA"/>
</dbReference>
<dbReference type="RefSeq" id="NP_745010.1">
    <property type="nucleotide sequence ID" value="NC_002947.4"/>
</dbReference>
<dbReference type="RefSeq" id="WP_010953771.1">
    <property type="nucleotide sequence ID" value="NZ_CP169744.1"/>
</dbReference>
<dbReference type="PDB" id="4C0W">
    <property type="method" value="X-ray"/>
    <property type="resolution" value="1.60 A"/>
    <property type="chains" value="A=1-201"/>
</dbReference>
<dbReference type="PDB" id="4C0X">
    <property type="method" value="X-ray"/>
    <property type="resolution" value="1.50 A"/>
    <property type="chains" value="A=1-201"/>
</dbReference>
<dbReference type="PDB" id="4C14">
    <property type="method" value="X-ray"/>
    <property type="resolution" value="1.90 A"/>
    <property type="chains" value="A=1-203"/>
</dbReference>
<dbReference type="PDBsum" id="4C0W"/>
<dbReference type="PDBsum" id="4C0X"/>
<dbReference type="PDBsum" id="4C14"/>
<dbReference type="SMR" id="Q88IY3"/>
<dbReference type="STRING" id="160488.PP_2866"/>
<dbReference type="PaxDb" id="160488-PP_2866"/>
<dbReference type="KEGG" id="ppu:PP_2866"/>
<dbReference type="PATRIC" id="fig|160488.4.peg.3038"/>
<dbReference type="eggNOG" id="COG1182">
    <property type="taxonomic scope" value="Bacteria"/>
</dbReference>
<dbReference type="HOGENOM" id="CLU_088964_0_0_6"/>
<dbReference type="OrthoDB" id="9787136at2"/>
<dbReference type="PhylomeDB" id="Q88IY3"/>
<dbReference type="BioCyc" id="PPUT160488:G1G01-3045-MONOMER"/>
<dbReference type="BRENDA" id="1.7.1.17">
    <property type="organism ID" value="5092"/>
</dbReference>
<dbReference type="EvolutionaryTrace" id="Q88IY3"/>
<dbReference type="Proteomes" id="UP000000556">
    <property type="component" value="Chromosome"/>
</dbReference>
<dbReference type="GO" id="GO:0009055">
    <property type="term" value="F:electron transfer activity"/>
    <property type="evidence" value="ECO:0007669"/>
    <property type="project" value="UniProtKB-UniRule"/>
</dbReference>
<dbReference type="GO" id="GO:0010181">
    <property type="term" value="F:FMN binding"/>
    <property type="evidence" value="ECO:0007669"/>
    <property type="project" value="UniProtKB-UniRule"/>
</dbReference>
<dbReference type="GO" id="GO:0016652">
    <property type="term" value="F:oxidoreductase activity, acting on NAD(P)H as acceptor"/>
    <property type="evidence" value="ECO:0007669"/>
    <property type="project" value="UniProtKB-UniRule"/>
</dbReference>
<dbReference type="GO" id="GO:0016655">
    <property type="term" value="F:oxidoreductase activity, acting on NAD(P)H, quinone or similar compound as acceptor"/>
    <property type="evidence" value="ECO:0007669"/>
    <property type="project" value="InterPro"/>
</dbReference>
<dbReference type="Gene3D" id="3.40.50.360">
    <property type="match status" value="1"/>
</dbReference>
<dbReference type="HAMAP" id="MF_01216">
    <property type="entry name" value="Azoreductase_type1"/>
    <property type="match status" value="1"/>
</dbReference>
<dbReference type="InterPro" id="IPR003680">
    <property type="entry name" value="Flavodoxin_fold"/>
</dbReference>
<dbReference type="InterPro" id="IPR029039">
    <property type="entry name" value="Flavoprotein-like_sf"/>
</dbReference>
<dbReference type="InterPro" id="IPR050104">
    <property type="entry name" value="FMN-dep_NADH:Q_OxRdtase_AzoR1"/>
</dbReference>
<dbReference type="InterPro" id="IPR023048">
    <property type="entry name" value="NADH:quinone_OxRdtase_FMN_depd"/>
</dbReference>
<dbReference type="PANTHER" id="PTHR43741">
    <property type="entry name" value="FMN-DEPENDENT NADH-AZOREDUCTASE 1"/>
    <property type="match status" value="1"/>
</dbReference>
<dbReference type="PANTHER" id="PTHR43741:SF4">
    <property type="entry name" value="FMN-DEPENDENT NADH:QUINONE OXIDOREDUCTASE"/>
    <property type="match status" value="1"/>
</dbReference>
<dbReference type="Pfam" id="PF02525">
    <property type="entry name" value="Flavodoxin_2"/>
    <property type="match status" value="1"/>
</dbReference>
<dbReference type="SUPFAM" id="SSF52218">
    <property type="entry name" value="Flavoproteins"/>
    <property type="match status" value="1"/>
</dbReference>
<protein>
    <recommendedName>
        <fullName evidence="1">FMN-dependent NADH:quinone oxidoreductase 1</fullName>
        <ecNumber evidence="1">1.6.5.-</ecNumber>
    </recommendedName>
    <alternativeName>
        <fullName evidence="1">Azo-dye reductase 1</fullName>
    </alternativeName>
    <alternativeName>
        <fullName evidence="1">FMN-dependent NADH-azo compound oxidoreductase 1</fullName>
    </alternativeName>
    <alternativeName>
        <fullName evidence="1">FMN-dependent NADH-azoreductase 1</fullName>
        <ecNumber evidence="1">1.7.1.17</ecNumber>
    </alternativeName>
</protein>
<reference key="1">
    <citation type="journal article" date="2002" name="Environ. Microbiol.">
        <title>Complete genome sequence and comparative analysis of the metabolically versatile Pseudomonas putida KT2440.</title>
        <authorList>
            <person name="Nelson K.E."/>
            <person name="Weinel C."/>
            <person name="Paulsen I.T."/>
            <person name="Dodson R.J."/>
            <person name="Hilbert H."/>
            <person name="Martins dos Santos V.A.P."/>
            <person name="Fouts D.E."/>
            <person name="Gill S.R."/>
            <person name="Pop M."/>
            <person name="Holmes M."/>
            <person name="Brinkac L.M."/>
            <person name="Beanan M.J."/>
            <person name="DeBoy R.T."/>
            <person name="Daugherty S.C."/>
            <person name="Kolonay J.F."/>
            <person name="Madupu R."/>
            <person name="Nelson W.C."/>
            <person name="White O."/>
            <person name="Peterson J.D."/>
            <person name="Khouri H.M."/>
            <person name="Hance I."/>
            <person name="Chris Lee P."/>
            <person name="Holtzapple E.K."/>
            <person name="Scanlan D."/>
            <person name="Tran K."/>
            <person name="Moazzez A."/>
            <person name="Utterback T.R."/>
            <person name="Rizzo M."/>
            <person name="Lee K."/>
            <person name="Kosack D."/>
            <person name="Moestl D."/>
            <person name="Wedler H."/>
            <person name="Lauber J."/>
            <person name="Stjepandic D."/>
            <person name="Hoheisel J."/>
            <person name="Straetz M."/>
            <person name="Heim S."/>
            <person name="Kiewitz C."/>
            <person name="Eisen J.A."/>
            <person name="Timmis K.N."/>
            <person name="Duesterhoeft A."/>
            <person name="Tuemmler B."/>
            <person name="Fraser C.M."/>
        </authorList>
    </citation>
    <scope>NUCLEOTIDE SEQUENCE [LARGE SCALE GENOMIC DNA]</scope>
    <source>
        <strain>ATCC 47054 / DSM 6125 / CFBP 8728 / NCIMB 11950 / KT2440</strain>
    </source>
</reference>
<keyword id="KW-0002">3D-structure</keyword>
<keyword id="KW-0285">Flavoprotein</keyword>
<keyword id="KW-0288">FMN</keyword>
<keyword id="KW-0520">NAD</keyword>
<keyword id="KW-0560">Oxidoreductase</keyword>
<keyword id="KW-1185">Reference proteome</keyword>
<name>AZOR1_PSEPK</name>
<feature type="chain" id="PRO_0000245952" description="FMN-dependent NADH:quinone oxidoreductase 1">
    <location>
        <begin position="1"/>
        <end position="203"/>
    </location>
</feature>
<feature type="binding site" evidence="1">
    <location>
        <position position="9"/>
    </location>
    <ligand>
        <name>FMN</name>
        <dbReference type="ChEBI" id="CHEBI:58210"/>
    </ligand>
</feature>
<feature type="binding site" evidence="1">
    <location>
        <begin position="15"/>
        <end position="17"/>
    </location>
    <ligand>
        <name>FMN</name>
        <dbReference type="ChEBI" id="CHEBI:58210"/>
    </ligand>
</feature>
<feature type="binding site" evidence="1">
    <location>
        <begin position="95"/>
        <end position="98"/>
    </location>
    <ligand>
        <name>FMN</name>
        <dbReference type="ChEBI" id="CHEBI:58210"/>
    </ligand>
</feature>
<feature type="binding site" evidence="1">
    <location>
        <begin position="139"/>
        <end position="142"/>
    </location>
    <ligand>
        <name>FMN</name>
        <dbReference type="ChEBI" id="CHEBI:58210"/>
    </ligand>
</feature>
<feature type="strand" evidence="2">
    <location>
        <begin position="2"/>
        <end position="7"/>
    </location>
</feature>
<feature type="helix" evidence="2">
    <location>
        <begin position="12"/>
        <end position="14"/>
    </location>
</feature>
<feature type="helix" evidence="2">
    <location>
        <begin position="16"/>
        <end position="31"/>
    </location>
</feature>
<feature type="strand" evidence="2">
    <location>
        <begin position="36"/>
        <end position="41"/>
    </location>
</feature>
<feature type="turn" evidence="2">
    <location>
        <begin position="42"/>
        <end position="45"/>
    </location>
</feature>
<feature type="helix" evidence="2">
    <location>
        <begin position="52"/>
        <end position="58"/>
    </location>
</feature>
<feature type="helix" evidence="2">
    <location>
        <begin position="62"/>
        <end position="64"/>
    </location>
</feature>
<feature type="helix" evidence="2">
    <location>
        <begin position="67"/>
        <end position="85"/>
    </location>
</feature>
<feature type="strand" evidence="2">
    <location>
        <begin position="87"/>
        <end position="94"/>
    </location>
</feature>
<feature type="helix" evidence="2">
    <location>
        <begin position="102"/>
        <end position="111"/>
    </location>
</feature>
<feature type="turn" evidence="2">
    <location>
        <begin position="114"/>
        <end position="116"/>
    </location>
</feature>
<feature type="strand" evidence="2">
    <location>
        <begin position="117"/>
        <end position="121"/>
    </location>
</feature>
<feature type="strand" evidence="2">
    <location>
        <begin position="124"/>
        <end position="128"/>
    </location>
</feature>
<feature type="strand" evidence="2">
    <location>
        <begin position="133"/>
        <end position="139"/>
    </location>
</feature>
<feature type="helix" evidence="2">
    <location>
        <begin position="148"/>
        <end position="150"/>
    </location>
</feature>
<feature type="turn" evidence="2">
    <location>
        <begin position="151"/>
        <end position="153"/>
    </location>
</feature>
<feature type="helix" evidence="2">
    <location>
        <begin position="154"/>
        <end position="163"/>
    </location>
</feature>
<feature type="strand" evidence="2">
    <location>
        <begin position="168"/>
        <end position="174"/>
    </location>
</feature>
<feature type="helix" evidence="2">
    <location>
        <begin position="181"/>
        <end position="197"/>
    </location>
</feature>
<proteinExistence type="evidence at protein level"/>
<accession>Q88IY3</accession>
<organism>
    <name type="scientific">Pseudomonas putida (strain ATCC 47054 / DSM 6125 / CFBP 8728 / NCIMB 11950 / KT2440)</name>
    <dbReference type="NCBI Taxonomy" id="160488"/>
    <lineage>
        <taxon>Bacteria</taxon>
        <taxon>Pseudomonadati</taxon>
        <taxon>Pseudomonadota</taxon>
        <taxon>Gammaproteobacteria</taxon>
        <taxon>Pseudomonadales</taxon>
        <taxon>Pseudomonadaceae</taxon>
        <taxon>Pseudomonas</taxon>
    </lineage>
</organism>